<feature type="chain" id="PRO_0000391902" description="Cyclin-dependent kinase 15">
    <location>
        <begin position="1"/>
        <end position="418"/>
    </location>
</feature>
<feature type="domain" description="Protein kinase" evidence="2">
    <location>
        <begin position="84"/>
        <end position="369"/>
    </location>
</feature>
<feature type="active site" description="Proton acceptor" evidence="2 3">
    <location>
        <position position="205"/>
    </location>
</feature>
<feature type="binding site" evidence="2">
    <location>
        <begin position="90"/>
        <end position="98"/>
    </location>
    <ligand>
        <name>ATP</name>
        <dbReference type="ChEBI" id="CHEBI:30616"/>
    </ligand>
</feature>
<feature type="binding site" evidence="2">
    <location>
        <position position="113"/>
    </location>
    <ligand>
        <name>ATP</name>
        <dbReference type="ChEBI" id="CHEBI:30616"/>
    </ligand>
</feature>
<organism>
    <name type="scientific">Danio rerio</name>
    <name type="common">Zebrafish</name>
    <name type="synonym">Brachydanio rerio</name>
    <dbReference type="NCBI Taxonomy" id="7955"/>
    <lineage>
        <taxon>Eukaryota</taxon>
        <taxon>Metazoa</taxon>
        <taxon>Chordata</taxon>
        <taxon>Craniata</taxon>
        <taxon>Vertebrata</taxon>
        <taxon>Euteleostomi</taxon>
        <taxon>Actinopterygii</taxon>
        <taxon>Neopterygii</taxon>
        <taxon>Teleostei</taxon>
        <taxon>Ostariophysi</taxon>
        <taxon>Cypriniformes</taxon>
        <taxon>Danionidae</taxon>
        <taxon>Danioninae</taxon>
        <taxon>Danio</taxon>
    </lineage>
</organism>
<comment type="function">
    <text evidence="1">Serine/threonine-protein kinase involved in the control of the eukaryotic cell cycle, whose activity is controlled by an associated cyclin.</text>
</comment>
<comment type="catalytic activity">
    <reaction>
        <text>L-seryl-[protein] + ATP = O-phospho-L-seryl-[protein] + ADP + H(+)</text>
        <dbReference type="Rhea" id="RHEA:17989"/>
        <dbReference type="Rhea" id="RHEA-COMP:9863"/>
        <dbReference type="Rhea" id="RHEA-COMP:11604"/>
        <dbReference type="ChEBI" id="CHEBI:15378"/>
        <dbReference type="ChEBI" id="CHEBI:29999"/>
        <dbReference type="ChEBI" id="CHEBI:30616"/>
        <dbReference type="ChEBI" id="CHEBI:83421"/>
        <dbReference type="ChEBI" id="CHEBI:456216"/>
        <dbReference type="EC" id="2.7.11.22"/>
    </reaction>
</comment>
<comment type="catalytic activity">
    <reaction>
        <text>L-threonyl-[protein] + ATP = O-phospho-L-threonyl-[protein] + ADP + H(+)</text>
        <dbReference type="Rhea" id="RHEA:46608"/>
        <dbReference type="Rhea" id="RHEA-COMP:11060"/>
        <dbReference type="Rhea" id="RHEA-COMP:11605"/>
        <dbReference type="ChEBI" id="CHEBI:15378"/>
        <dbReference type="ChEBI" id="CHEBI:30013"/>
        <dbReference type="ChEBI" id="CHEBI:30616"/>
        <dbReference type="ChEBI" id="CHEBI:61977"/>
        <dbReference type="ChEBI" id="CHEBI:456216"/>
        <dbReference type="EC" id="2.7.11.22"/>
    </reaction>
</comment>
<comment type="cofactor">
    <cofactor evidence="1">
        <name>Mg(2+)</name>
        <dbReference type="ChEBI" id="CHEBI:18420"/>
    </cofactor>
</comment>
<comment type="similarity">
    <text evidence="4">Belongs to the protein kinase superfamily. CMGC Ser/Thr protein kinase family. CDC2/CDKX subfamily.</text>
</comment>
<keyword id="KW-0067">ATP-binding</keyword>
<keyword id="KW-0418">Kinase</keyword>
<keyword id="KW-0460">Magnesium</keyword>
<keyword id="KW-0479">Metal-binding</keyword>
<keyword id="KW-0547">Nucleotide-binding</keyword>
<keyword id="KW-1185">Reference proteome</keyword>
<keyword id="KW-0723">Serine/threonine-protein kinase</keyword>
<keyword id="KW-0808">Transferase</keyword>
<gene>
    <name type="primary">cdk15</name>
    <name type="synonym">pftk2</name>
    <name type="ORF">zgc:136819</name>
</gene>
<protein>
    <recommendedName>
        <fullName>Cyclin-dependent kinase 15</fullName>
        <ecNumber>2.7.11.22</ecNumber>
    </recommendedName>
    <alternativeName>
        <fullName>Cell division protein kinase 15</fullName>
    </alternativeName>
</protein>
<accession>Q1RLU9</accession>
<dbReference type="EC" id="2.7.11.22"/>
<dbReference type="EMBL" id="BC115279">
    <property type="protein sequence ID" value="AAI15280.1"/>
    <property type="molecule type" value="mRNA"/>
</dbReference>
<dbReference type="RefSeq" id="NP_001035398.1">
    <property type="nucleotide sequence ID" value="NM_001040308.1"/>
</dbReference>
<dbReference type="RefSeq" id="XP_005165793.1">
    <property type="nucleotide sequence ID" value="XM_005165736.3"/>
</dbReference>
<dbReference type="SMR" id="Q1RLU9"/>
<dbReference type="FunCoup" id="Q1RLU9">
    <property type="interactions" value="708"/>
</dbReference>
<dbReference type="STRING" id="7955.ENSDARP00000075572"/>
<dbReference type="PaxDb" id="7955-ENSDARP00000075572"/>
<dbReference type="Ensembl" id="ENSDART00000081129">
    <property type="protein sequence ID" value="ENSDARP00000075572"/>
    <property type="gene ID" value="ENSDARG00000006093"/>
</dbReference>
<dbReference type="GeneID" id="791619"/>
<dbReference type="KEGG" id="dre:791619"/>
<dbReference type="AGR" id="ZFIN:ZDB-GENE-060421-7193"/>
<dbReference type="CTD" id="65061"/>
<dbReference type="ZFIN" id="ZDB-GENE-060421-7193">
    <property type="gene designation" value="cdk15"/>
</dbReference>
<dbReference type="eggNOG" id="KOG0594">
    <property type="taxonomic scope" value="Eukaryota"/>
</dbReference>
<dbReference type="HOGENOM" id="CLU_000288_181_6_1"/>
<dbReference type="InParanoid" id="Q1RLU9"/>
<dbReference type="OMA" id="EMFQGEP"/>
<dbReference type="OrthoDB" id="1732493at2759"/>
<dbReference type="PhylomeDB" id="Q1RLU9"/>
<dbReference type="TreeFam" id="TF106508"/>
<dbReference type="PRO" id="PR:Q1RLU9"/>
<dbReference type="Proteomes" id="UP000000437">
    <property type="component" value="Chromosome 6"/>
</dbReference>
<dbReference type="Bgee" id="ENSDARG00000006093">
    <property type="expression patterns" value="Expressed in brain and 7 other cell types or tissues"/>
</dbReference>
<dbReference type="GO" id="GO:0005737">
    <property type="term" value="C:cytoplasm"/>
    <property type="evidence" value="ECO:0000318"/>
    <property type="project" value="GO_Central"/>
</dbReference>
<dbReference type="GO" id="GO:0005829">
    <property type="term" value="C:cytosol"/>
    <property type="evidence" value="ECO:0000318"/>
    <property type="project" value="GO_Central"/>
</dbReference>
<dbReference type="GO" id="GO:0005634">
    <property type="term" value="C:nucleus"/>
    <property type="evidence" value="ECO:0000318"/>
    <property type="project" value="GO_Central"/>
</dbReference>
<dbReference type="GO" id="GO:0005524">
    <property type="term" value="F:ATP binding"/>
    <property type="evidence" value="ECO:0007669"/>
    <property type="project" value="UniProtKB-KW"/>
</dbReference>
<dbReference type="GO" id="GO:0030332">
    <property type="term" value="F:cyclin binding"/>
    <property type="evidence" value="ECO:0000318"/>
    <property type="project" value="GO_Central"/>
</dbReference>
<dbReference type="GO" id="GO:0004693">
    <property type="term" value="F:cyclin-dependent protein serine/threonine kinase activity"/>
    <property type="evidence" value="ECO:0000318"/>
    <property type="project" value="GO_Central"/>
</dbReference>
<dbReference type="GO" id="GO:0046872">
    <property type="term" value="F:metal ion binding"/>
    <property type="evidence" value="ECO:0007669"/>
    <property type="project" value="UniProtKB-KW"/>
</dbReference>
<dbReference type="GO" id="GO:0106310">
    <property type="term" value="F:protein serine kinase activity"/>
    <property type="evidence" value="ECO:0007669"/>
    <property type="project" value="RHEA"/>
</dbReference>
<dbReference type="GO" id="GO:1901987">
    <property type="term" value="P:regulation of cell cycle phase transition"/>
    <property type="evidence" value="ECO:0000318"/>
    <property type="project" value="GO_Central"/>
</dbReference>
<dbReference type="CDD" id="cd07870">
    <property type="entry name" value="STKc_PFTAIRE2"/>
    <property type="match status" value="1"/>
</dbReference>
<dbReference type="FunFam" id="1.10.510.10:FF:000131">
    <property type="entry name" value="cyclin-dependent kinase 14 isoform X1"/>
    <property type="match status" value="1"/>
</dbReference>
<dbReference type="FunFam" id="3.30.200.20:FF:000007">
    <property type="entry name" value="Cyclin-dependent kinase 14, putative"/>
    <property type="match status" value="1"/>
</dbReference>
<dbReference type="Gene3D" id="3.30.200.20">
    <property type="entry name" value="Phosphorylase Kinase, domain 1"/>
    <property type="match status" value="1"/>
</dbReference>
<dbReference type="Gene3D" id="1.10.510.10">
    <property type="entry name" value="Transferase(Phosphotransferase) domain 1"/>
    <property type="match status" value="1"/>
</dbReference>
<dbReference type="InterPro" id="IPR050108">
    <property type="entry name" value="CDK"/>
</dbReference>
<dbReference type="InterPro" id="IPR042761">
    <property type="entry name" value="CDK15_STKc"/>
</dbReference>
<dbReference type="InterPro" id="IPR011009">
    <property type="entry name" value="Kinase-like_dom_sf"/>
</dbReference>
<dbReference type="InterPro" id="IPR000719">
    <property type="entry name" value="Prot_kinase_dom"/>
</dbReference>
<dbReference type="InterPro" id="IPR017441">
    <property type="entry name" value="Protein_kinase_ATP_BS"/>
</dbReference>
<dbReference type="InterPro" id="IPR008271">
    <property type="entry name" value="Ser/Thr_kinase_AS"/>
</dbReference>
<dbReference type="PANTHER" id="PTHR24056">
    <property type="entry name" value="CELL DIVISION PROTEIN KINASE"/>
    <property type="match status" value="1"/>
</dbReference>
<dbReference type="PANTHER" id="PTHR24056:SF159">
    <property type="entry name" value="CYCLIN-DEPENDENT KINASE 15"/>
    <property type="match status" value="1"/>
</dbReference>
<dbReference type="Pfam" id="PF00069">
    <property type="entry name" value="Pkinase"/>
    <property type="match status" value="1"/>
</dbReference>
<dbReference type="SMART" id="SM00220">
    <property type="entry name" value="S_TKc"/>
    <property type="match status" value="1"/>
</dbReference>
<dbReference type="SUPFAM" id="SSF56112">
    <property type="entry name" value="Protein kinase-like (PK-like)"/>
    <property type="match status" value="1"/>
</dbReference>
<dbReference type="PROSITE" id="PS00107">
    <property type="entry name" value="PROTEIN_KINASE_ATP"/>
    <property type="match status" value="1"/>
</dbReference>
<dbReference type="PROSITE" id="PS50011">
    <property type="entry name" value="PROTEIN_KINASE_DOM"/>
    <property type="match status" value="1"/>
</dbReference>
<dbReference type="PROSITE" id="PS00108">
    <property type="entry name" value="PROTEIN_KINASE_ST"/>
    <property type="match status" value="1"/>
</dbReference>
<name>CDK15_DANRE</name>
<sequence>MQNLRHAASEAFQRLGLKQRHLGYEELGELDGVEKPQPHWFHTLQVRRLRVQRGRSNSDPMGGKSFQQEFQWKTGLQFGNATSYLNLEKLGEGTYATVYKGISRINGHLVALKVIHMKTEEGIPFTAIREASLLKGLKHANIVLLHDIIHTRESLTFVFEYVQTDLAQYMIQHPGGLHSYNIRLFMFQLLRGLSYIHGRRILHRDLKPQNLLISYLGELKLADFGLARSKSIPCQTYSAEVVTLWYRPPDVLMGSTDYSTALDIWGAGCIFIEMLQGSPAFPGVADVFEQLLKIWTVIGVPTEEIWPGVSDLPNYKPEWFLPCKPQQFRDVWKRLSQLPYKTEDLAQQMLMMNPKDRISAQDALLHPYFNTLPPPLMHLRDTVSIFKVPGVRLESEARDIFSPSRRTKTPLAPLAKCW</sequence>
<evidence type="ECO:0000250" key="1"/>
<evidence type="ECO:0000255" key="2">
    <source>
        <dbReference type="PROSITE-ProRule" id="PRU00159"/>
    </source>
</evidence>
<evidence type="ECO:0000255" key="3">
    <source>
        <dbReference type="PROSITE-ProRule" id="PRU10027"/>
    </source>
</evidence>
<evidence type="ECO:0000305" key="4"/>
<reference key="1">
    <citation type="submission" date="2006-04" db="EMBL/GenBank/DDBJ databases">
        <authorList>
            <consortium name="NIH - Zebrafish Gene Collection (ZGC) project"/>
        </authorList>
    </citation>
    <scope>NUCLEOTIDE SEQUENCE [LARGE SCALE MRNA]</scope>
</reference>
<proteinExistence type="evidence at transcript level"/>